<gene>
    <name type="primary">lysX</name>
    <name type="ordered locus">MAV_3128</name>
</gene>
<proteinExistence type="inferred from homology"/>
<evidence type="ECO:0000250" key="1"/>
<evidence type="ECO:0000255" key="2"/>
<evidence type="ECO:0000256" key="3">
    <source>
        <dbReference type="SAM" id="MobiDB-lite"/>
    </source>
</evidence>
<evidence type="ECO:0000305" key="4"/>
<protein>
    <recommendedName>
        <fullName>Lysylphosphatidylglycerol biosynthesis bifunctional protein LysX</fullName>
    </recommendedName>
    <domain>
        <recommendedName>
            <fullName>Lysine--tRNA ligase</fullName>
            <ecNumber>6.1.1.6</ecNumber>
        </recommendedName>
        <alternativeName>
            <fullName>Lysyl-tRNA synthetase</fullName>
            <shortName>LysRS</shortName>
        </alternativeName>
    </domain>
    <domain>
        <recommendedName>
            <fullName>Phosphatidylglycerol lysyltransferase</fullName>
            <ecNumber>2.3.2.3</ecNumber>
        </recommendedName>
        <alternativeName>
            <fullName>Lysylphosphatidylglycerol synthetase</fullName>
            <shortName>LPG synthetase</shortName>
        </alternativeName>
    </domain>
</protein>
<reference key="1">
    <citation type="submission" date="2006-10" db="EMBL/GenBank/DDBJ databases">
        <authorList>
            <person name="Fleischmann R.D."/>
            <person name="Dodson R.J."/>
            <person name="Haft D.H."/>
            <person name="Merkel J.S."/>
            <person name="Nelson W.C."/>
            <person name="Fraser C.M."/>
        </authorList>
    </citation>
    <scope>NUCLEOTIDE SEQUENCE [LARGE SCALE GENOMIC DNA]</scope>
    <source>
        <strain>104</strain>
    </source>
</reference>
<name>LYSX_MYCA1</name>
<sequence>MRRAGRSRQFSSVEEAFSTSAARPGRRGRRSGRENTAKFVPATLSASTSFSRIEGISSRSVTLASPGSRSGSGPRSGPRLGPANRSTSRYRWVPAAAGWTVGVIATVSLLGSVSPLIRYLIKVPREFINDYLFNFPDTSIAWSFVLALLAAALTARKRIAWLLLLGNMILAAALNVADIAAGDNTAAEIFGENLGFAVHIVAIVLLVLAYREFWAKVRKGALVKAAAVLVAGDVVGILVSWGLVELFPGTLARQDRLPYVVNRVVGFALADPDLFTGRPHVFLNAIFGLFGALALIMATIVLFQSQRAENALTGEDESAIRGLLELYGKNDSLGYFATRRDKSVVFAQSGRAAITYRVEIGVCLASGDPIGDPRAWPQAVDAWLGLCQTYGWAPGVMGASTQGARTYREAGLNALELGDEAILRTSEFKLSGPDMRGVRQAVTRARRAGLTVRIRRHRDISPEAMADTIARADAWRDTQTERGFSMALGRLGDPADGDCLLVEAIDRDGSVVAMLSLVPWGTTGVSLDLMRRSPSSPNGTIELMVSELALNAESLGITRISLNFAMFRSAFEQGAQLGAGPVARLWRGLLLFFSRWWQLETLYRSNMKYQPDWVPRYACYEDARLIPRVGVASVIAEGFLVLPFSRRDKVHTGHHPAVPARLAQSGLLHHDGSAPDVSGLRPERTDAEEARSRLPEQVRVRLAKLKVLQRNGVDAYPVGCPPSHTVAQALDADDQQDITVAGRILRIRDFGGVLFAQLRDWSGEMQVLLDNSRLERGRTADFTAAIDLGDLVEVSGQMGFSKKGTRSLIVTDWRMIGKCLRPLPNKWKGLTDPEARVRTRYVDLAVNPESRELIAARSEVLRSVRQTLFAKGFIEVETPILQQIHGGATARPFVTHINTYDMDLFLRIAPELYLKRLCVGGVERVFELGRAFRNEGVDFSHNPEFTLLEAYQAHADYRVWIDGCRELIQNAAQAAHGEQTVLRPGADGRLQPVDISGIWAVKTVHDAVSEALGEQVDPGTSLSTLRKLSDAARIPYRAHWDAGAVVLELYEHLVEDRTEEPTFYVDFPTSVSPLTRPHRSRPGVAERWDLVAWGVELATAYSELTDPVEQRRRLQEQSLLAAGGDPEAMELDEDFLQAMEYAMPPTGGLGMGVDRLVMLITGRSIRETLPFPLAKPH</sequence>
<feature type="chain" id="PRO_0000394315" description="Lysylphosphatidylglycerol biosynthesis bifunctional protein LysX">
    <location>
        <begin position="1"/>
        <end position="1177"/>
    </location>
</feature>
<feature type="transmembrane region" description="Helical" evidence="2">
    <location>
        <begin position="93"/>
        <end position="113"/>
    </location>
</feature>
<feature type="transmembrane region" description="Helical" evidence="2">
    <location>
        <begin position="135"/>
        <end position="155"/>
    </location>
</feature>
<feature type="transmembrane region" description="Helical" evidence="2">
    <location>
        <begin position="159"/>
        <end position="179"/>
    </location>
</feature>
<feature type="transmembrane region" description="Helical" evidence="2">
    <location>
        <begin position="189"/>
        <end position="209"/>
    </location>
</feature>
<feature type="transmembrane region" description="Helical" evidence="2">
    <location>
        <begin position="227"/>
        <end position="247"/>
    </location>
</feature>
<feature type="transmembrane region" description="Helical" evidence="2">
    <location>
        <begin position="281"/>
        <end position="301"/>
    </location>
</feature>
<feature type="region of interest" description="Phosphatidylglycerol lysyltransferase">
    <location>
        <begin position="1"/>
        <end position="676"/>
    </location>
</feature>
<feature type="region of interest" description="Disordered" evidence="3">
    <location>
        <begin position="1"/>
        <end position="40"/>
    </location>
</feature>
<feature type="region of interest" description="Disordered" evidence="3">
    <location>
        <begin position="61"/>
        <end position="85"/>
    </location>
</feature>
<feature type="region of interest" description="Disordered" evidence="3">
    <location>
        <begin position="673"/>
        <end position="693"/>
    </location>
</feature>
<feature type="region of interest" description="Lysine--tRNA ligase">
    <location>
        <begin position="677"/>
        <end position="1177"/>
    </location>
</feature>
<feature type="compositionally biased region" description="Polar residues" evidence="3">
    <location>
        <begin position="8"/>
        <end position="21"/>
    </location>
</feature>
<feature type="compositionally biased region" description="Low complexity" evidence="3">
    <location>
        <begin position="65"/>
        <end position="82"/>
    </location>
</feature>
<feature type="compositionally biased region" description="Basic and acidic residues" evidence="3">
    <location>
        <begin position="681"/>
        <end position="693"/>
    </location>
</feature>
<feature type="binding site" evidence="1">
    <location>
        <position position="1089"/>
    </location>
    <ligand>
        <name>Mg(2+)</name>
        <dbReference type="ChEBI" id="CHEBI:18420"/>
        <label>1</label>
    </ligand>
</feature>
<feature type="binding site" evidence="1">
    <location>
        <position position="1096"/>
    </location>
    <ligand>
        <name>Mg(2+)</name>
        <dbReference type="ChEBI" id="CHEBI:18420"/>
        <label>1</label>
    </ligand>
</feature>
<feature type="binding site" evidence="1">
    <location>
        <position position="1096"/>
    </location>
    <ligand>
        <name>Mg(2+)</name>
        <dbReference type="ChEBI" id="CHEBI:18420"/>
        <label>2</label>
    </ligand>
</feature>
<comment type="function">
    <text evidence="1">Catalyzes the production of L-lysyl-tRNA(Lys)transfer and the transfer of a lysyl group from L-lysyl-tRNA(Lys) to membrane-bound phosphatidylglycerol (PG), which produces lysylphosphatidylglycerol (LPG), one of the components of the bacterial membrane with a positive net charge. LPG synthesis contributes to the resistance to cationic antimicrobial peptides (CAMPs) and likely protects M.tuberculosis against the CAMPs produced by competiting microorganisms (bacteriocins). In fact, the modification of anionic phosphatidylglycerol with positively charged L-lysine results in repulsion of the peptides (By similarity).</text>
</comment>
<comment type="catalytic activity">
    <reaction>
        <text>tRNA(Lys) + L-lysine + ATP = L-lysyl-tRNA(Lys) + AMP + diphosphate</text>
        <dbReference type="Rhea" id="RHEA:20792"/>
        <dbReference type="Rhea" id="RHEA-COMP:9696"/>
        <dbReference type="Rhea" id="RHEA-COMP:9697"/>
        <dbReference type="ChEBI" id="CHEBI:30616"/>
        <dbReference type="ChEBI" id="CHEBI:32551"/>
        <dbReference type="ChEBI" id="CHEBI:33019"/>
        <dbReference type="ChEBI" id="CHEBI:78442"/>
        <dbReference type="ChEBI" id="CHEBI:78529"/>
        <dbReference type="ChEBI" id="CHEBI:456215"/>
        <dbReference type="EC" id="6.1.1.6"/>
    </reaction>
</comment>
<comment type="catalytic activity">
    <reaction>
        <text>L-lysyl-tRNA(Lys) + a 1,2-diacyl-sn-glycero-3-phospho-(1'-sn-glycerol) = a 1,2-diacyl-sn-glycero-3-phospho-1'-(3'-O-L-lysyl)-sn-glycerol + tRNA(Lys)</text>
        <dbReference type="Rhea" id="RHEA:10668"/>
        <dbReference type="Rhea" id="RHEA-COMP:9696"/>
        <dbReference type="Rhea" id="RHEA-COMP:9697"/>
        <dbReference type="ChEBI" id="CHEBI:64716"/>
        <dbReference type="ChEBI" id="CHEBI:75792"/>
        <dbReference type="ChEBI" id="CHEBI:78442"/>
        <dbReference type="ChEBI" id="CHEBI:78529"/>
        <dbReference type="EC" id="2.3.2.3"/>
    </reaction>
</comment>
<comment type="cofactor">
    <cofactor evidence="1">
        <name>Mg(2+)</name>
        <dbReference type="ChEBI" id="CHEBI:18420"/>
    </cofactor>
    <text evidence="1">Binds 3 Mg(2+) ions per subunit.</text>
</comment>
<comment type="subcellular location">
    <subcellularLocation>
        <location evidence="4">Cell membrane</location>
        <topology evidence="4">Multi-pass membrane protein</topology>
    </subcellularLocation>
</comment>
<comment type="similarity">
    <text evidence="4">In the N-terminal section; belongs to the LPG synthetase family.</text>
</comment>
<comment type="similarity">
    <text evidence="4">In the C-terminal section; belongs to the class-II aminoacyl-tRNA synthetase family.</text>
</comment>
<comment type="sequence caution" evidence="4">
    <conflict type="erroneous initiation">
        <sequence resource="EMBL-CDS" id="ABK69491"/>
    </conflict>
    <text>Truncated N-terminus.</text>
</comment>
<keyword id="KW-0030">Aminoacyl-tRNA synthetase</keyword>
<keyword id="KW-0046">Antibiotic resistance</keyword>
<keyword id="KW-0067">ATP-binding</keyword>
<keyword id="KW-1003">Cell membrane</keyword>
<keyword id="KW-0436">Ligase</keyword>
<keyword id="KW-0443">Lipid metabolism</keyword>
<keyword id="KW-0460">Magnesium</keyword>
<keyword id="KW-0472">Membrane</keyword>
<keyword id="KW-0479">Metal-binding</keyword>
<keyword id="KW-0511">Multifunctional enzyme</keyword>
<keyword id="KW-0547">Nucleotide-binding</keyword>
<keyword id="KW-0808">Transferase</keyword>
<keyword id="KW-0812">Transmembrane</keyword>
<keyword id="KW-1133">Transmembrane helix</keyword>
<keyword id="KW-0843">Virulence</keyword>
<dbReference type="EC" id="6.1.1.6"/>
<dbReference type="EC" id="2.3.2.3"/>
<dbReference type="EMBL" id="CP000479">
    <property type="protein sequence ID" value="ABK69491.1"/>
    <property type="status" value="ALT_INIT"/>
    <property type="molecule type" value="Genomic_DNA"/>
</dbReference>
<dbReference type="SMR" id="A0QHC4"/>
<dbReference type="KEGG" id="mav:MAV_3128"/>
<dbReference type="HOGENOM" id="CLU_008255_2_1_11"/>
<dbReference type="BRENDA" id="2.3.2.3">
    <property type="organism ID" value="3492"/>
</dbReference>
<dbReference type="PHI-base" id="PHI:7990"/>
<dbReference type="Proteomes" id="UP000001574">
    <property type="component" value="Chromosome"/>
</dbReference>
<dbReference type="GO" id="GO:0005829">
    <property type="term" value="C:cytosol"/>
    <property type="evidence" value="ECO:0007669"/>
    <property type="project" value="TreeGrafter"/>
</dbReference>
<dbReference type="GO" id="GO:0005886">
    <property type="term" value="C:plasma membrane"/>
    <property type="evidence" value="ECO:0007669"/>
    <property type="project" value="UniProtKB-SubCell"/>
</dbReference>
<dbReference type="GO" id="GO:0005524">
    <property type="term" value="F:ATP binding"/>
    <property type="evidence" value="ECO:0007669"/>
    <property type="project" value="UniProtKB-UniRule"/>
</dbReference>
<dbReference type="GO" id="GO:0004824">
    <property type="term" value="F:lysine-tRNA ligase activity"/>
    <property type="evidence" value="ECO:0007669"/>
    <property type="project" value="UniProtKB-UniRule"/>
</dbReference>
<dbReference type="GO" id="GO:0000287">
    <property type="term" value="F:magnesium ion binding"/>
    <property type="evidence" value="ECO:0007669"/>
    <property type="project" value="UniProtKB-UniRule"/>
</dbReference>
<dbReference type="GO" id="GO:0050071">
    <property type="term" value="F:phosphatidylglycerol lysyltransferase activity"/>
    <property type="evidence" value="ECO:0007669"/>
    <property type="project" value="UniProtKB-EC"/>
</dbReference>
<dbReference type="GO" id="GO:0000049">
    <property type="term" value="F:tRNA binding"/>
    <property type="evidence" value="ECO:0007669"/>
    <property type="project" value="TreeGrafter"/>
</dbReference>
<dbReference type="GO" id="GO:0006629">
    <property type="term" value="P:lipid metabolic process"/>
    <property type="evidence" value="ECO:0007669"/>
    <property type="project" value="UniProtKB-KW"/>
</dbReference>
<dbReference type="GO" id="GO:0006430">
    <property type="term" value="P:lysyl-tRNA aminoacylation"/>
    <property type="evidence" value="ECO:0007669"/>
    <property type="project" value="UniProtKB-UniRule"/>
</dbReference>
<dbReference type="GO" id="GO:0046677">
    <property type="term" value="P:response to antibiotic"/>
    <property type="evidence" value="ECO:0007669"/>
    <property type="project" value="UniProtKB-KW"/>
</dbReference>
<dbReference type="CDD" id="cd04322">
    <property type="entry name" value="LysRS_N"/>
    <property type="match status" value="1"/>
</dbReference>
<dbReference type="Gene3D" id="3.30.930.10">
    <property type="entry name" value="Bira Bifunctional Protein, Domain 2"/>
    <property type="match status" value="1"/>
</dbReference>
<dbReference type="Gene3D" id="2.40.50.140">
    <property type="entry name" value="Nucleic acid-binding proteins"/>
    <property type="match status" value="1"/>
</dbReference>
<dbReference type="HAMAP" id="MF_00252">
    <property type="entry name" value="Lys_tRNA_synth_class2"/>
    <property type="match status" value="1"/>
</dbReference>
<dbReference type="InterPro" id="IPR004364">
    <property type="entry name" value="Aa-tRNA-synt_II"/>
</dbReference>
<dbReference type="InterPro" id="IPR006195">
    <property type="entry name" value="aa-tRNA-synth_II"/>
</dbReference>
<dbReference type="InterPro" id="IPR045864">
    <property type="entry name" value="aa-tRNA-synth_II/BPL/LPL"/>
</dbReference>
<dbReference type="InterPro" id="IPR024320">
    <property type="entry name" value="LPG_synthase_C"/>
</dbReference>
<dbReference type="InterPro" id="IPR002313">
    <property type="entry name" value="Lys-tRNA-ligase_II"/>
</dbReference>
<dbReference type="InterPro" id="IPR044136">
    <property type="entry name" value="Lys-tRNA-ligase_II_N"/>
</dbReference>
<dbReference type="InterPro" id="IPR018149">
    <property type="entry name" value="Lys-tRNA-synth_II_C"/>
</dbReference>
<dbReference type="InterPro" id="IPR012340">
    <property type="entry name" value="NA-bd_OB-fold"/>
</dbReference>
<dbReference type="InterPro" id="IPR004365">
    <property type="entry name" value="NA-bd_OB_tRNA"/>
</dbReference>
<dbReference type="InterPro" id="IPR031553">
    <property type="entry name" value="tRNA-synt_2_TM"/>
</dbReference>
<dbReference type="NCBIfam" id="TIGR00499">
    <property type="entry name" value="lysS_bact"/>
    <property type="match status" value="1"/>
</dbReference>
<dbReference type="NCBIfam" id="NF001756">
    <property type="entry name" value="PRK00484.1"/>
    <property type="match status" value="1"/>
</dbReference>
<dbReference type="NCBIfam" id="NF002821">
    <property type="entry name" value="PRK02983.1"/>
    <property type="match status" value="1"/>
</dbReference>
<dbReference type="PANTHER" id="PTHR42918:SF15">
    <property type="entry name" value="LYSINE--TRNA LIGASE, CHLOROPLASTIC_MITOCHONDRIAL"/>
    <property type="match status" value="1"/>
</dbReference>
<dbReference type="PANTHER" id="PTHR42918">
    <property type="entry name" value="LYSYL-TRNA SYNTHETASE"/>
    <property type="match status" value="1"/>
</dbReference>
<dbReference type="Pfam" id="PF09924">
    <property type="entry name" value="LPG_synthase_C"/>
    <property type="match status" value="1"/>
</dbReference>
<dbReference type="Pfam" id="PF00152">
    <property type="entry name" value="tRNA-synt_2"/>
    <property type="match status" value="1"/>
</dbReference>
<dbReference type="Pfam" id="PF16995">
    <property type="entry name" value="tRNA-synt_2_TM"/>
    <property type="match status" value="1"/>
</dbReference>
<dbReference type="Pfam" id="PF01336">
    <property type="entry name" value="tRNA_anti-codon"/>
    <property type="match status" value="1"/>
</dbReference>
<dbReference type="PRINTS" id="PR00982">
    <property type="entry name" value="TRNASYNTHLYS"/>
</dbReference>
<dbReference type="SUPFAM" id="SSF55681">
    <property type="entry name" value="Class II aaRS and biotin synthetases"/>
    <property type="match status" value="1"/>
</dbReference>
<dbReference type="SUPFAM" id="SSF50249">
    <property type="entry name" value="Nucleic acid-binding proteins"/>
    <property type="match status" value="1"/>
</dbReference>
<dbReference type="PROSITE" id="PS50862">
    <property type="entry name" value="AA_TRNA_LIGASE_II"/>
    <property type="match status" value="1"/>
</dbReference>
<organism>
    <name type="scientific">Mycobacterium avium (strain 104)</name>
    <dbReference type="NCBI Taxonomy" id="243243"/>
    <lineage>
        <taxon>Bacteria</taxon>
        <taxon>Bacillati</taxon>
        <taxon>Actinomycetota</taxon>
        <taxon>Actinomycetes</taxon>
        <taxon>Mycobacteriales</taxon>
        <taxon>Mycobacteriaceae</taxon>
        <taxon>Mycobacterium</taxon>
        <taxon>Mycobacterium avium complex (MAC)</taxon>
    </lineage>
</organism>
<accession>A0QHC4</accession>